<sequence>MRQQQMRNIGIMAHVDAGKTTTTERMLFYTGKIHRMGEIDDGATTMDWMVQEQERGITIQSAATTVRWREVDITIIDTPGHVDFTAEVERALRVLDGVVVVLCAVGRVQPQTETVWYQADRYDIPRVCFVNKMDRIGADFFSVLDQVHNKFGIDAVALQIPIGSGTSFEGVIDLITMKEIFWDAASSGEQMEYRPIQSARIAQAREAREKMLDVISIYSDEVTECVLAGEHVPVQLLHAEIRKAVRERRYVPFLCGSSRHNLGVQPLLDAVVEYLPAPQERKAVEGFHVQKKEPVFIAPTAEGPLLALVFKIQYEREAGLLCYVRMYSGKLRTGDSIVNIGKKKRERVYRILRMHSNKSETVECIQAGDIAVIVGLKSAQTGDSVGDGSCPVVLESMHFPEPVISVSLEPMDASSRDKLQETLGILSREDPTFSVREDAETGQLLISGMGELHLDVLTTRMREDFNVQVRVGKPHVTYRESIRKTVERTLRVQRVIGGKEYMAGLTLRVEARKRGAGNEFFCQVKELRGTVCTAHTAPAEIIGAVEHAIRGAWDGGIQSGYPCVDVGVHLLSVEYQELTSSPFIFEAAAVQAFGEACVAAEPYVLEPIMSVELSCAQENVGDVMNVIIQRGGIILGMDSKHGRELVHAQAPMKKMFGFSTDVRSASRGGASFTMRFSHFESCA</sequence>
<organism>
    <name type="scientific">Treponema pallidum (strain Nichols)</name>
    <dbReference type="NCBI Taxonomy" id="243276"/>
    <lineage>
        <taxon>Bacteria</taxon>
        <taxon>Pseudomonadati</taxon>
        <taxon>Spirochaetota</taxon>
        <taxon>Spirochaetia</taxon>
        <taxon>Spirochaetales</taxon>
        <taxon>Treponemataceae</taxon>
        <taxon>Treponema</taxon>
    </lineage>
</organism>
<reference key="1">
    <citation type="journal article" date="1998" name="Science">
        <title>Complete genome sequence of Treponema pallidum, the syphilis spirochete.</title>
        <authorList>
            <person name="Fraser C.M."/>
            <person name="Norris S.J."/>
            <person name="Weinstock G.M."/>
            <person name="White O."/>
            <person name="Sutton G.G."/>
            <person name="Dodson R.J."/>
            <person name="Gwinn M.L."/>
            <person name="Hickey E.K."/>
            <person name="Clayton R.A."/>
            <person name="Ketchum K.A."/>
            <person name="Sodergren E."/>
            <person name="Hardham J.M."/>
            <person name="McLeod M.P."/>
            <person name="Salzberg S.L."/>
            <person name="Peterson J.D."/>
            <person name="Khalak H.G."/>
            <person name="Richardson D.L."/>
            <person name="Howell J.K."/>
            <person name="Chidambaram M."/>
            <person name="Utterback T.R."/>
            <person name="McDonald L.A."/>
            <person name="Artiach P."/>
            <person name="Bowman C."/>
            <person name="Cotton M.D."/>
            <person name="Fujii C."/>
            <person name="Garland S.A."/>
            <person name="Hatch B."/>
            <person name="Horst K."/>
            <person name="Roberts K.M."/>
            <person name="Sandusky M."/>
            <person name="Weidman J.F."/>
            <person name="Smith H.O."/>
            <person name="Venter J.C."/>
        </authorList>
    </citation>
    <scope>NUCLEOTIDE SEQUENCE [LARGE SCALE GENOMIC DNA]</scope>
    <source>
        <strain>Nichols</strain>
    </source>
</reference>
<accession>O83464</accession>
<protein>
    <recommendedName>
        <fullName>Elongation factor G 2</fullName>
        <shortName>EF-G 2</shortName>
    </recommendedName>
</protein>
<gene>
    <name type="primary">fusB</name>
    <name type="synonym">fusA-1</name>
    <name type="ordered locus">TP_0450</name>
</gene>
<comment type="function">
    <text evidence="1">Catalyzes the GTP-dependent ribosomal translocation step during translation elongation. During this step, the ribosome changes from the pre-translocational (PRE) to the post-translocational (POST) state as the newly formed A-site-bound peptidyl-tRNA and P-site-bound deacylated tRNA move to the P and E sites, respectively. Catalyzes the coordinated movement of the two tRNA molecules, the mRNA and conformational changes in the ribosome (By similarity).</text>
</comment>
<comment type="subcellular location">
    <subcellularLocation>
        <location evidence="1">Cytoplasm</location>
    </subcellularLocation>
</comment>
<comment type="similarity">
    <text evidence="2">Belongs to the TRAFAC class translation factor GTPase superfamily. Classic translation factor GTPase family. EF-G/EF-2 subfamily.</text>
</comment>
<name>EFG2_TREPA</name>
<evidence type="ECO:0000250" key="1"/>
<evidence type="ECO:0000305" key="2"/>
<keyword id="KW-0963">Cytoplasm</keyword>
<keyword id="KW-0251">Elongation factor</keyword>
<keyword id="KW-0342">GTP-binding</keyword>
<keyword id="KW-0547">Nucleotide-binding</keyword>
<keyword id="KW-0648">Protein biosynthesis</keyword>
<keyword id="KW-1185">Reference proteome</keyword>
<dbReference type="EMBL" id="AE000520">
    <property type="protein sequence ID" value="AAC65438.1"/>
    <property type="molecule type" value="Genomic_DNA"/>
</dbReference>
<dbReference type="PIR" id="C71322">
    <property type="entry name" value="C71322"/>
</dbReference>
<dbReference type="SMR" id="O83464"/>
<dbReference type="STRING" id="243276.TP_0450"/>
<dbReference type="EnsemblBacteria" id="AAC65438">
    <property type="protein sequence ID" value="AAC65438"/>
    <property type="gene ID" value="TP_0450"/>
</dbReference>
<dbReference type="KEGG" id="tpa:TP_0450"/>
<dbReference type="KEGG" id="tpw:TPANIC_0450a"/>
<dbReference type="eggNOG" id="COG0480">
    <property type="taxonomic scope" value="Bacteria"/>
</dbReference>
<dbReference type="HOGENOM" id="CLU_002794_4_1_12"/>
<dbReference type="OrthoDB" id="9804431at2"/>
<dbReference type="Proteomes" id="UP000000811">
    <property type="component" value="Chromosome"/>
</dbReference>
<dbReference type="GO" id="GO:0005737">
    <property type="term" value="C:cytoplasm"/>
    <property type="evidence" value="ECO:0007669"/>
    <property type="project" value="UniProtKB-SubCell"/>
</dbReference>
<dbReference type="GO" id="GO:0005525">
    <property type="term" value="F:GTP binding"/>
    <property type="evidence" value="ECO:0007669"/>
    <property type="project" value="UniProtKB-UniRule"/>
</dbReference>
<dbReference type="GO" id="GO:0003924">
    <property type="term" value="F:GTPase activity"/>
    <property type="evidence" value="ECO:0007669"/>
    <property type="project" value="InterPro"/>
</dbReference>
<dbReference type="GO" id="GO:0003746">
    <property type="term" value="F:translation elongation factor activity"/>
    <property type="evidence" value="ECO:0007669"/>
    <property type="project" value="UniProtKB-UniRule"/>
</dbReference>
<dbReference type="GO" id="GO:0032790">
    <property type="term" value="P:ribosome disassembly"/>
    <property type="evidence" value="ECO:0007669"/>
    <property type="project" value="TreeGrafter"/>
</dbReference>
<dbReference type="CDD" id="cd01886">
    <property type="entry name" value="EF-G"/>
    <property type="match status" value="1"/>
</dbReference>
<dbReference type="CDD" id="cd16262">
    <property type="entry name" value="EFG_III"/>
    <property type="match status" value="1"/>
</dbReference>
<dbReference type="CDD" id="cd01680">
    <property type="entry name" value="EFG_like_IV"/>
    <property type="match status" value="1"/>
</dbReference>
<dbReference type="CDD" id="cd03713">
    <property type="entry name" value="EFG_mtEFG_C"/>
    <property type="match status" value="1"/>
</dbReference>
<dbReference type="CDD" id="cd04088">
    <property type="entry name" value="EFG_mtEFG_II"/>
    <property type="match status" value="1"/>
</dbReference>
<dbReference type="FunFam" id="3.30.70.240:FF:000001">
    <property type="entry name" value="Elongation factor G"/>
    <property type="match status" value="1"/>
</dbReference>
<dbReference type="FunFam" id="3.30.70.870:FF:000001">
    <property type="entry name" value="Elongation factor G"/>
    <property type="match status" value="1"/>
</dbReference>
<dbReference type="FunFam" id="3.40.50.300:FF:000029">
    <property type="entry name" value="Elongation factor G"/>
    <property type="match status" value="1"/>
</dbReference>
<dbReference type="Gene3D" id="3.30.230.10">
    <property type="match status" value="1"/>
</dbReference>
<dbReference type="Gene3D" id="3.30.70.240">
    <property type="match status" value="1"/>
</dbReference>
<dbReference type="Gene3D" id="3.30.70.870">
    <property type="entry name" value="Elongation Factor G (Translational Gtpase), domain 3"/>
    <property type="match status" value="1"/>
</dbReference>
<dbReference type="Gene3D" id="3.40.50.300">
    <property type="entry name" value="P-loop containing nucleotide triphosphate hydrolases"/>
    <property type="match status" value="1"/>
</dbReference>
<dbReference type="Gene3D" id="2.40.30.10">
    <property type="entry name" value="Translation factors"/>
    <property type="match status" value="1"/>
</dbReference>
<dbReference type="HAMAP" id="MF_00054_B">
    <property type="entry name" value="EF_G_EF_2_B"/>
    <property type="match status" value="1"/>
</dbReference>
<dbReference type="InterPro" id="IPR041095">
    <property type="entry name" value="EFG_II"/>
</dbReference>
<dbReference type="InterPro" id="IPR009022">
    <property type="entry name" value="EFG_III"/>
</dbReference>
<dbReference type="InterPro" id="IPR035647">
    <property type="entry name" value="EFG_III/V"/>
</dbReference>
<dbReference type="InterPro" id="IPR035649">
    <property type="entry name" value="EFG_V"/>
</dbReference>
<dbReference type="InterPro" id="IPR000640">
    <property type="entry name" value="EFG_V-like"/>
</dbReference>
<dbReference type="InterPro" id="IPR004161">
    <property type="entry name" value="EFTu-like_2"/>
</dbReference>
<dbReference type="InterPro" id="IPR031157">
    <property type="entry name" value="G_TR_CS"/>
</dbReference>
<dbReference type="InterPro" id="IPR027417">
    <property type="entry name" value="P-loop_NTPase"/>
</dbReference>
<dbReference type="InterPro" id="IPR020568">
    <property type="entry name" value="Ribosomal_Su5_D2-typ_SF"/>
</dbReference>
<dbReference type="InterPro" id="IPR014721">
    <property type="entry name" value="Ribsml_uS5_D2-typ_fold_subgr"/>
</dbReference>
<dbReference type="InterPro" id="IPR005225">
    <property type="entry name" value="Small_GTP-bd"/>
</dbReference>
<dbReference type="InterPro" id="IPR000795">
    <property type="entry name" value="T_Tr_GTP-bd_dom"/>
</dbReference>
<dbReference type="InterPro" id="IPR009000">
    <property type="entry name" value="Transl_B-barrel_sf"/>
</dbReference>
<dbReference type="InterPro" id="IPR004540">
    <property type="entry name" value="Transl_elong_EFG/EF2"/>
</dbReference>
<dbReference type="InterPro" id="IPR005517">
    <property type="entry name" value="Transl_elong_EFG/EF2_IV"/>
</dbReference>
<dbReference type="NCBIfam" id="TIGR00484">
    <property type="entry name" value="EF-G"/>
    <property type="match status" value="1"/>
</dbReference>
<dbReference type="NCBIfam" id="TIGR00231">
    <property type="entry name" value="small_GTP"/>
    <property type="match status" value="1"/>
</dbReference>
<dbReference type="PANTHER" id="PTHR43261:SF1">
    <property type="entry name" value="RIBOSOME-RELEASING FACTOR 2, MITOCHONDRIAL"/>
    <property type="match status" value="1"/>
</dbReference>
<dbReference type="PANTHER" id="PTHR43261">
    <property type="entry name" value="TRANSLATION ELONGATION FACTOR G-RELATED"/>
    <property type="match status" value="1"/>
</dbReference>
<dbReference type="Pfam" id="PF00679">
    <property type="entry name" value="EFG_C"/>
    <property type="match status" value="1"/>
</dbReference>
<dbReference type="Pfam" id="PF14492">
    <property type="entry name" value="EFG_III"/>
    <property type="match status" value="1"/>
</dbReference>
<dbReference type="Pfam" id="PF03764">
    <property type="entry name" value="EFG_IV"/>
    <property type="match status" value="1"/>
</dbReference>
<dbReference type="Pfam" id="PF00009">
    <property type="entry name" value="GTP_EFTU"/>
    <property type="match status" value="1"/>
</dbReference>
<dbReference type="Pfam" id="PF03144">
    <property type="entry name" value="GTP_EFTU_D2"/>
    <property type="match status" value="1"/>
</dbReference>
<dbReference type="PRINTS" id="PR00315">
    <property type="entry name" value="ELONGATNFCT"/>
</dbReference>
<dbReference type="SMART" id="SM00838">
    <property type="entry name" value="EFG_C"/>
    <property type="match status" value="1"/>
</dbReference>
<dbReference type="SMART" id="SM00889">
    <property type="entry name" value="EFG_IV"/>
    <property type="match status" value="1"/>
</dbReference>
<dbReference type="SUPFAM" id="SSF54980">
    <property type="entry name" value="EF-G C-terminal domain-like"/>
    <property type="match status" value="2"/>
</dbReference>
<dbReference type="SUPFAM" id="SSF52540">
    <property type="entry name" value="P-loop containing nucleoside triphosphate hydrolases"/>
    <property type="match status" value="1"/>
</dbReference>
<dbReference type="SUPFAM" id="SSF54211">
    <property type="entry name" value="Ribosomal protein S5 domain 2-like"/>
    <property type="match status" value="1"/>
</dbReference>
<dbReference type="SUPFAM" id="SSF50447">
    <property type="entry name" value="Translation proteins"/>
    <property type="match status" value="1"/>
</dbReference>
<dbReference type="PROSITE" id="PS00301">
    <property type="entry name" value="G_TR_1"/>
    <property type="match status" value="1"/>
</dbReference>
<dbReference type="PROSITE" id="PS51722">
    <property type="entry name" value="G_TR_2"/>
    <property type="match status" value="1"/>
</dbReference>
<proteinExistence type="inferred from homology"/>
<feature type="chain" id="PRO_0000091255" description="Elongation factor G 2">
    <location>
        <begin position="1"/>
        <end position="683"/>
    </location>
</feature>
<feature type="domain" description="tr-type G">
    <location>
        <begin position="4"/>
        <end position="279"/>
    </location>
</feature>
<feature type="binding site" evidence="1">
    <location>
        <begin position="13"/>
        <end position="20"/>
    </location>
    <ligand>
        <name>GTP</name>
        <dbReference type="ChEBI" id="CHEBI:37565"/>
    </ligand>
</feature>
<feature type="binding site" evidence="1">
    <location>
        <begin position="77"/>
        <end position="81"/>
    </location>
    <ligand>
        <name>GTP</name>
        <dbReference type="ChEBI" id="CHEBI:37565"/>
    </ligand>
</feature>
<feature type="binding site" evidence="1">
    <location>
        <begin position="131"/>
        <end position="134"/>
    </location>
    <ligand>
        <name>GTP</name>
        <dbReference type="ChEBI" id="CHEBI:37565"/>
    </ligand>
</feature>